<comment type="function">
    <text evidence="1">Specifically methylates the adenine in position 37 of tRNA(1)(Val) (anticodon cmo5UAC).</text>
</comment>
<comment type="catalytic activity">
    <reaction evidence="1">
        <text>adenosine(37) in tRNA1(Val) + S-adenosyl-L-methionine = N(6)-methyladenosine(37) in tRNA1(Val) + S-adenosyl-L-homocysteine + H(+)</text>
        <dbReference type="Rhea" id="RHEA:43160"/>
        <dbReference type="Rhea" id="RHEA-COMP:10369"/>
        <dbReference type="Rhea" id="RHEA-COMP:10370"/>
        <dbReference type="ChEBI" id="CHEBI:15378"/>
        <dbReference type="ChEBI" id="CHEBI:57856"/>
        <dbReference type="ChEBI" id="CHEBI:59789"/>
        <dbReference type="ChEBI" id="CHEBI:74411"/>
        <dbReference type="ChEBI" id="CHEBI:74449"/>
        <dbReference type="EC" id="2.1.1.223"/>
    </reaction>
</comment>
<comment type="subcellular location">
    <subcellularLocation>
        <location evidence="1">Cytoplasm</location>
    </subcellularLocation>
</comment>
<comment type="similarity">
    <text evidence="1">Belongs to the methyltransferase superfamily. tRNA (adenine-N(6)-)-methyltransferase family.</text>
</comment>
<name>TRMN6_SALPA</name>
<proteinExistence type="inferred from homology"/>
<evidence type="ECO:0000255" key="1">
    <source>
        <dbReference type="HAMAP-Rule" id="MF_01872"/>
    </source>
</evidence>
<reference key="1">
    <citation type="journal article" date="2004" name="Nat. Genet.">
        <title>Comparison of genome degradation in Paratyphi A and Typhi, human-restricted serovars of Salmonella enterica that cause typhoid.</title>
        <authorList>
            <person name="McClelland M."/>
            <person name="Sanderson K.E."/>
            <person name="Clifton S.W."/>
            <person name="Latreille P."/>
            <person name="Porwollik S."/>
            <person name="Sabo A."/>
            <person name="Meyer R."/>
            <person name="Bieri T."/>
            <person name="Ozersky P."/>
            <person name="McLellan M."/>
            <person name="Harkins C.R."/>
            <person name="Wang C."/>
            <person name="Nguyen C."/>
            <person name="Berghoff A."/>
            <person name="Elliott G."/>
            <person name="Kohlberg S."/>
            <person name="Strong C."/>
            <person name="Du F."/>
            <person name="Carter J."/>
            <person name="Kremizki C."/>
            <person name="Layman D."/>
            <person name="Leonard S."/>
            <person name="Sun H."/>
            <person name="Fulton L."/>
            <person name="Nash W."/>
            <person name="Miner T."/>
            <person name="Minx P."/>
            <person name="Delehaunty K."/>
            <person name="Fronick C."/>
            <person name="Magrini V."/>
            <person name="Nhan M."/>
            <person name="Warren W."/>
            <person name="Florea L."/>
            <person name="Spieth J."/>
            <person name="Wilson R.K."/>
        </authorList>
    </citation>
    <scope>NUCLEOTIDE SEQUENCE [LARGE SCALE GENOMIC DNA]</scope>
    <source>
        <strain>ATCC 9150 / SARB42</strain>
    </source>
</reference>
<sequence>MSQSGSALRRNGFTFKQFFVAHDRCAMKVGTDGILLGAWAPVADVKRILDIGTGSGLLALMLAQRTDDNVPIDAVELDAGAAMQAQENVAHSPWPHRITVHTDDIQRWAPRQTVRFDLIISNPPYYEPGVECATPQREQARYTATLDHQTLLAIAADCITEDGFFCVVLPEQIGNAFTQQALNMGWHLRLRTDVAENEARLPHRVLLAFSPQAGECFSDRLVIRGSDQHYSESYTALTQAFYLFM</sequence>
<keyword id="KW-0963">Cytoplasm</keyword>
<keyword id="KW-0489">Methyltransferase</keyword>
<keyword id="KW-0949">S-adenosyl-L-methionine</keyword>
<keyword id="KW-0808">Transferase</keyword>
<keyword id="KW-0819">tRNA processing</keyword>
<accession>Q5PNB8</accession>
<dbReference type="EC" id="2.1.1.223" evidence="1"/>
<dbReference type="EMBL" id="CP000026">
    <property type="protein sequence ID" value="AAV76298.1"/>
    <property type="molecule type" value="Genomic_DNA"/>
</dbReference>
<dbReference type="SMR" id="Q5PNB8"/>
<dbReference type="DNASU" id="3176149"/>
<dbReference type="KEGG" id="spt:SPA0276"/>
<dbReference type="HOGENOM" id="CLU_061983_0_0_6"/>
<dbReference type="Proteomes" id="UP000008185">
    <property type="component" value="Chromosome"/>
</dbReference>
<dbReference type="GO" id="GO:0005737">
    <property type="term" value="C:cytoplasm"/>
    <property type="evidence" value="ECO:0007669"/>
    <property type="project" value="UniProtKB-SubCell"/>
</dbReference>
<dbReference type="GO" id="GO:0003676">
    <property type="term" value="F:nucleic acid binding"/>
    <property type="evidence" value="ECO:0007669"/>
    <property type="project" value="InterPro"/>
</dbReference>
<dbReference type="GO" id="GO:0016430">
    <property type="term" value="F:tRNA (adenine-N6)-methyltransferase activity"/>
    <property type="evidence" value="ECO:0007669"/>
    <property type="project" value="UniProtKB-UniRule"/>
</dbReference>
<dbReference type="GO" id="GO:0032259">
    <property type="term" value="P:methylation"/>
    <property type="evidence" value="ECO:0007669"/>
    <property type="project" value="UniProtKB-KW"/>
</dbReference>
<dbReference type="GO" id="GO:0008033">
    <property type="term" value="P:tRNA processing"/>
    <property type="evidence" value="ECO:0007669"/>
    <property type="project" value="UniProtKB-UniRule"/>
</dbReference>
<dbReference type="CDD" id="cd02440">
    <property type="entry name" value="AdoMet_MTases"/>
    <property type="match status" value="1"/>
</dbReference>
<dbReference type="Gene3D" id="3.40.50.150">
    <property type="entry name" value="Vaccinia Virus protein VP39"/>
    <property type="match status" value="1"/>
</dbReference>
<dbReference type="HAMAP" id="MF_01872">
    <property type="entry name" value="tRNA_methyltr_YfiC"/>
    <property type="match status" value="1"/>
</dbReference>
<dbReference type="InterPro" id="IPR002052">
    <property type="entry name" value="DNA_methylase_N6_adenine_CS"/>
</dbReference>
<dbReference type="InterPro" id="IPR029063">
    <property type="entry name" value="SAM-dependent_MTases_sf"/>
</dbReference>
<dbReference type="InterPro" id="IPR007848">
    <property type="entry name" value="Small_mtfrase_dom"/>
</dbReference>
<dbReference type="InterPro" id="IPR050210">
    <property type="entry name" value="tRNA_Adenine-N(6)_MTase"/>
</dbReference>
<dbReference type="InterPro" id="IPR022882">
    <property type="entry name" value="tRNA_adenine-N6_MeTrfase"/>
</dbReference>
<dbReference type="NCBIfam" id="NF047853">
    <property type="entry name" value="tRm6a37MtseTrmN"/>
    <property type="match status" value="1"/>
</dbReference>
<dbReference type="PANTHER" id="PTHR47739">
    <property type="entry name" value="TRNA1(VAL) (ADENINE(37)-N6)-METHYLTRANSFERASE"/>
    <property type="match status" value="1"/>
</dbReference>
<dbReference type="PANTHER" id="PTHR47739:SF1">
    <property type="entry name" value="TRNA1(VAL) (ADENINE(37)-N6)-METHYLTRANSFERASE"/>
    <property type="match status" value="1"/>
</dbReference>
<dbReference type="Pfam" id="PF05175">
    <property type="entry name" value="MTS"/>
    <property type="match status" value="1"/>
</dbReference>
<dbReference type="SUPFAM" id="SSF53335">
    <property type="entry name" value="S-adenosyl-L-methionine-dependent methyltransferases"/>
    <property type="match status" value="1"/>
</dbReference>
<dbReference type="PROSITE" id="PS00092">
    <property type="entry name" value="N6_MTASE"/>
    <property type="match status" value="1"/>
</dbReference>
<gene>
    <name evidence="1" type="primary">yfiC</name>
    <name type="ordered locus">SPA0276</name>
</gene>
<protein>
    <recommendedName>
        <fullName evidence="1">tRNA1(Val) (adenine(37)-N6)-methyltransferase</fullName>
        <ecNumber evidence="1">2.1.1.223</ecNumber>
    </recommendedName>
    <alternativeName>
        <fullName evidence="1">tRNA m6A37 methyltransferase</fullName>
    </alternativeName>
</protein>
<organism>
    <name type="scientific">Salmonella paratyphi A (strain ATCC 9150 / SARB42)</name>
    <dbReference type="NCBI Taxonomy" id="295319"/>
    <lineage>
        <taxon>Bacteria</taxon>
        <taxon>Pseudomonadati</taxon>
        <taxon>Pseudomonadota</taxon>
        <taxon>Gammaproteobacteria</taxon>
        <taxon>Enterobacterales</taxon>
        <taxon>Enterobacteriaceae</taxon>
        <taxon>Salmonella</taxon>
    </lineage>
</organism>
<feature type="chain" id="PRO_0000387407" description="tRNA1(Val) (adenine(37)-N6)-methyltransferase">
    <location>
        <begin position="1"/>
        <end position="245"/>
    </location>
</feature>